<sequence length="576" mass="64302">MELNAGGVIAYISSSSSASSPASCHSEGSENSFQSSSSSVPSSPNSSNCDANGNPKNADISSIDGVLKSDRTDCPVKTGKTSAPGMTKSHSGMTKFSGMVLLCKVCGDVASGFHYGVHACEGCKGFFRRSIQQNIQYKKCLKNENCSIMRMNRNRCQQCRFKKCLSVGMSRDAVRFGRIPKREKQRMLIEMQSAMKTMMNTQFSGHLQNDTLAEQHDQSALPAQEQLRPKSQLEQENIKNTPSDFAKEEVIGMVTRAHKDTFLYNQEHRENSSESMPPQRGERIPRNMEQYNLNQDHRGSGIHNHFPCSERQQHLSGQYKGRNIMHYPNGHAVCIANGHCMNFSSAYTQRVCDRIPVGGCSQTENRNSYLCNTGGRMHLVCPMSKSPYVDPQKSGHEIWEEFSMSFTPAVKEVVEFAKRIPGFRDLSQHDQVNLLKAGTFEVLMVRFASLFDAKERTVTFLSGKKYSVDDLHSMGAGDLLSSMFEFSEKLNALQLSDEEMSLFTAVVLVSADRSGIENVNSVEALQETLIRALRTLIMKNHPNEASIFTKLLLKLPDLRSLNNMHSEELLAFKVHP</sequence>
<gene>
    <name evidence="16" type="primary">Nr1d2</name>
</gene>
<reference key="1">
    <citation type="journal article" date="1994" name="Mol. Endocrinol.">
        <title>Identification of RVR, a novel orphan nuclear receptor that acts as a negative transcriptional regulator.</title>
        <authorList>
            <person name="Retnakaran R."/>
            <person name="Flock G."/>
            <person name="Giguere V."/>
        </authorList>
    </citation>
    <scope>NUCLEOTIDE SEQUENCE [MRNA]</scope>
    <source>
        <strain>BALB/cJ</strain>
        <tissue>Brain</tissue>
    </source>
</reference>
<reference key="2">
    <citation type="journal article" date="1994" name="Mol. Endocrinol.">
        <title>Cross-talk among ROR alpha 1 and the Rev-erb family of orphan nuclear receptors.</title>
        <authorList>
            <person name="Forman B.M."/>
            <person name="Chen J."/>
            <person name="Blumberg B."/>
            <person name="Kliewer S.A."/>
            <person name="Henshaw R."/>
            <person name="Ong E."/>
            <person name="Evans R.M."/>
        </authorList>
    </citation>
    <scope>NUCLEOTIDE SEQUENCE [MRNA] OF 35-576</scope>
    <source>
        <strain>C57BL/6 X CBA</strain>
        <tissue>Liver</tissue>
    </source>
</reference>
<reference key="3">
    <citation type="journal article" date="2005" name="J. Biol. Chem.">
        <title>Rev-erbbeta regulates the expression of genes involved in lipid absorption in skeletal muscle cells: evidence for cross-talk between orphan nuclear receptors and myokines.</title>
        <authorList>
            <person name="Ramakrishnan S.N."/>
            <person name="Lau P."/>
            <person name="Burke L.J."/>
            <person name="Muscat G.E."/>
        </authorList>
    </citation>
    <scope>FUNCTION</scope>
    <scope>TISSUE SPECIFICITY</scope>
</reference>
<reference key="4">
    <citation type="journal article" date="2008" name="PLoS Genet.">
        <title>Redundant function of REV-ERBalpha and beta and non-essential role for Bmal1 cycling in transcriptional regulation of intracellular circadian rhythms.</title>
        <authorList>
            <person name="Liu A.C."/>
            <person name="Tran H.G."/>
            <person name="Zhang E.E."/>
            <person name="Priest A.A."/>
            <person name="Welsh D.K."/>
            <person name="Kay S.A."/>
        </authorList>
    </citation>
    <scope>FUNCTION</scope>
    <scope>TISSUE SPECIFICITY</scope>
</reference>
<reference key="5">
    <citation type="journal article" date="2009" name="Biochem. Biophys. Res. Commun.">
        <title>Rev-erb beta regulates the Srebp-1c promoter and mRNA expression in skeletal muscle cells.</title>
        <authorList>
            <person name="Ramakrishnan S.N."/>
            <person name="Lau P."/>
            <person name="Crowther L.M."/>
            <person name="Cleasby M.E."/>
            <person name="Millard S."/>
            <person name="Leong G.M."/>
            <person name="Cooney G.J."/>
            <person name="Muscat G.E."/>
        </authorList>
    </citation>
    <scope>FUNCTION</scope>
</reference>
<reference key="6">
    <citation type="journal article" date="2012" name="Genes Dev.">
        <title>Rev-erbalpha and Rev-erbbeta coordinately protect the circadian clock and normal metabolic function.</title>
        <authorList>
            <person name="Bugge A."/>
            <person name="Feng D."/>
            <person name="Everett L.J."/>
            <person name="Briggs E.R."/>
            <person name="Mullican S.E."/>
            <person name="Wang F."/>
            <person name="Jager J."/>
            <person name="Lazar M.A."/>
        </authorList>
    </citation>
    <scope>FUNCTION</scope>
</reference>
<reference key="7">
    <citation type="journal article" date="2013" name="J. Atheroscler. Thromb.">
        <title>Real-time analysis of the circadian oscillation of the Rev-Erb beta promoter.</title>
        <authorList>
            <person name="Yang F."/>
            <person name="Inoue I."/>
            <person name="Kumagai M."/>
            <person name="Takahashi S."/>
            <person name="Nakajima Y."/>
            <person name="Ikeda M."/>
        </authorList>
    </citation>
    <scope>FUNCTION</scope>
    <scope>INDUCTION</scope>
</reference>
<reference key="8">
    <citation type="journal article" date="2013" name="Nature">
        <title>Rev-Erbs repress macrophage gene expression by inhibiting enhancer-directed transcription.</title>
        <authorList>
            <person name="Lam M.T."/>
            <person name="Cho H."/>
            <person name="Lesch H.P."/>
            <person name="Gosselin D."/>
            <person name="Heinz S."/>
            <person name="Tanaka-Oishi Y."/>
            <person name="Benner C."/>
            <person name="Kaikkonen M.U."/>
            <person name="Kim A.S."/>
            <person name="Kosaka M."/>
            <person name="Lee C.Y."/>
            <person name="Watt A."/>
            <person name="Grossman T.R."/>
            <person name="Rosenfeld M.G."/>
            <person name="Evans R.M."/>
            <person name="Glass C.K."/>
        </authorList>
    </citation>
    <scope>FUNCTION</scope>
</reference>
<reference key="9">
    <citation type="journal article" date="2018" name="Biochem. Pharmacol.">
        <title>REV-ERBbeta is required to maintain normal wakefulness and the wake-inducing effect of dual REV-ERB agonist SR9009.</title>
        <authorList>
            <person name="Amador A."/>
            <person name="Kamenecka T.M."/>
            <person name="Solt L.A."/>
            <person name="Burris T.P."/>
        </authorList>
    </citation>
    <scope>FUNCTION</scope>
    <scope>DISRUPTION PHENOTYPE</scope>
</reference>
<reference key="10">
    <citation type="journal article" date="2018" name="Genes Cells">
        <title>Phosphorylation of N-terminal regions of REV-ERBs regulates their intracellular localization.</title>
        <authorList>
            <person name="Ohba Y."/>
            <person name="Tei H."/>
        </authorList>
    </citation>
    <scope>SUBCELLULAR LOCATION</scope>
    <scope>PHOSPHORYLATION BY CKSN1E</scope>
</reference>
<reference key="11">
    <citation type="journal article" date="2018" name="J. Clin. Invest.">
        <title>Circadian clock component REV-ERBalpha controls homeostatic regulation of pulmonary inflammation.</title>
        <authorList>
            <person name="Pariollaud M."/>
            <person name="Gibbs J.E."/>
            <person name="Hopwood T.W."/>
            <person name="Brown S."/>
            <person name="Begley N."/>
            <person name="Vonslow R."/>
            <person name="Poolman T."/>
            <person name="Guo B."/>
            <person name="Saer B."/>
            <person name="Jones D.H."/>
            <person name="Tellam J.P."/>
            <person name="Bresciani S."/>
            <person name="Tomkinson N.C."/>
            <person name="Wojno-Picon J."/>
            <person name="Cooper A.W."/>
            <person name="Daniels D.A."/>
            <person name="Trump R.P."/>
            <person name="Grant D."/>
            <person name="Zuercher W."/>
            <person name="Willson T.M."/>
            <person name="MacDonald A.S."/>
            <person name="Bolognese B."/>
            <person name="Podolin P.L."/>
            <person name="Sanchez Y."/>
            <person name="Loudon A.S."/>
            <person name="Ray D.W."/>
        </authorList>
    </citation>
    <scope>FUNCTION</scope>
    <scope>DISRUPTION PHENOTYPE</scope>
</reference>
<reference key="12">
    <citation type="journal article" date="2018" name="PLoS ONE">
        <title>Distinct roles for REV-ERBalpha and REV-ERBbeta in oxidative capacity and mitochondrial biogenesis in skeletal muscle.</title>
        <authorList>
            <person name="Amador A."/>
            <person name="Campbell S."/>
            <person name="Kazantzis M."/>
            <person name="Lan G."/>
            <person name="Burris T.P."/>
            <person name="Solt L.A."/>
        </authorList>
    </citation>
    <scope>FUNCTION</scope>
    <scope>DISRUPTION PHENOTYPE</scope>
</reference>
<comment type="function">
    <text evidence="6 7 8 9 10 11 12 13 14">Transcriptional repressor which coordinates circadian rhythm and metabolic pathways in a heme-dependent manner. Integral component of the complex transcription machinery that governs circadian rhythmicity and forms a critical negative limb of the circadian clock by directly repressing the expression of core clock components BMAL1 and CLOCK. Also regulates genes involved in metabolic functions, including lipid metabolism and the inflammatory response. Acts as a receptor for heme which stimulates its interaction with the NCOR1/HDAC3 corepressor complex, enhancing transcriptional repression. Recognizes two classes of DNA response elements within the promoter of its target genes and can bind to DNA as either monomers or homodimers, depending on the nature of the response element. Binds as a monomer to a response element composed of the consensus half-site motif 5'-[A/G]GGTCA-3' preceded by an A/T-rich 5' sequence (RevRE), or as a homodimer to a direct repeat of the core motif spaced by two nuclegotides (RevDR-2). Acts as a potent competitive repressor of ROR alpha (RORA) function and also negatively regulates the expression of NR1D1. Regulates lipid and energy homeostasis in the skeletal muscle via repression of genes involved in lipid metabolism and myogenesis including: CD36, FABP3, FABP4, UCP3, SCD1 and MSTN. Regulates hepatic lipid metabolism via the repression of APOC3. Represses gene expression at a distance in macrophages by inhibiting the transcription of enhancer-derived RNAs (eRNAs). In addition to its activity as a repressor, can also act as a transcriptional activator. Acts as a transcriptional activator of the sterol regulatory element-binding protein 1 (SREBF1) and the inflammatory mediator interleukin-6 (IL6) in the skeletal muscle. Plays a role in the regulation of circadian sleep/wake cycle; essential for maintaining wakefulness during the dark phase or active period (PubMed:29355503). Key regulator of skeletal muscle mitochondrial function; negatively regulates the skeletal muscle expression of core clock genes and genes involved in mitochondrial biogenesis, fatty acid beta-oxidation and lipid metabolism (PubMed:29723273). May play a role in the circadian control of neutrophilic inflammation in the lung (PubMed:29533925).</text>
</comment>
<comment type="activity regulation">
    <text evidence="1">The heme-bound form can bind gaseous signaling molecules such as CO and nitric oxide (NO) and NO can reverse its transcriptional repressor activity.</text>
</comment>
<comment type="subunit">
    <text evidence="2">Binds DNA as a monomer or a homodimer (By similarity). Interacts with NCOA5 coactivator, leading to a strong increase of transcription of target genes (By similarity). Interacts (via N-terminus) with KAT5 (By similarity). Interacts (via C-terminus) with HDAC1 (By similarity). Interacts with ZNHIT1 (By similarity). Interacts with SIAH2 (By similarity).</text>
</comment>
<comment type="interaction">
    <interactant intactId="EBI-5326205">
        <id>Q60674</id>
    </interactant>
    <interactant intactId="EBI-2863498">
        <id>Q9HCD5</id>
        <label>NCOA5</label>
    </interactant>
    <organismsDiffer>true</organismsDiffer>
    <experiments>2</experiments>
</comment>
<comment type="subcellular location">
    <subcellularLocation>
        <location evidence="3 13">Nucleus</location>
    </subcellularLocation>
    <subcellularLocation>
        <location evidence="13">Cytoplasm</location>
    </subcellularLocation>
    <text evidence="13">Phosphorylation by CSNK1E enhances its cytoplasmic localization.</text>
</comment>
<comment type="tissue specificity">
    <text evidence="6 7">Ubiquitous. Expressed abundantly in skeletal muscle and brown adipose tissue. Expressed during skeletal muscle myogenesis.</text>
</comment>
<comment type="induction">
    <text evidence="10">Activated by the CLOCK-BMAL1 heterodimer and DBP and repressed by CRY1.</text>
</comment>
<comment type="domain">
    <text>Composed of three domains: a modulating N-terminal domain, a DNA-binding domain and a C-terminal ligand-binding domain.</text>
</comment>
<comment type="PTM">
    <text evidence="2">Deacetylated by HDAC1 (By similarity). Acetylation and deacetylation regulate its transcriptional regulatory activity (By similarity).</text>
</comment>
<comment type="PTM">
    <text evidence="2">Under more reducing intracellular redox conditions, Cys-381 is in its heme-bound state, which is optimal for recruitment of the NCOR1/HDAC3 corepressor complex and repression of target genes (By similarity). When subjected to oxidative stress conditions, Cys-381 undergoes oxidation to form a disulfide bridge with Cys-371, also triggering a ligand switch that results in release of bound heme and derepression of target genes (By similarity).</text>
</comment>
<comment type="PTM">
    <text evidence="2">Ubiquitinated by SIAH2; leading to its proteasomal degradation.</text>
</comment>
<comment type="PTM">
    <text evidence="13">Phosphorylated by CSNK1E; phosphorylation enhances its cytoplasmic localization.</text>
</comment>
<comment type="disruption phenotype">
    <text evidence="12 13 14">Mice exhibit an altered circadian metabolism and feeding schedule, eating more and utilizing more carbohydrates as fuel during their nocturnal/sleep period (PubMed:29723273). Increased expression of circadian clock core genes and genes involved in lipid metabolism and fatty-acid oxidation in the skeletal muscle (PubMed:29723273). Mice exhibit decreased wakefulness and increased slow-wave sleep and rapid eye movement sleep during the dark phase (active period) (PubMed:29355503). Altered expression in the brain of core circadian clock genes and genes involved in sleep induction and wakefulness (PubMed:29355503). Conditional knockout of both NR1D1 and NR1D2 in bronchiolar epithelial cells abolished diurnal rhythmicity of PER2 in the bronchioles and increased inflammatory responses and chemokine activation (PubMed:29533925).</text>
</comment>
<comment type="similarity">
    <text evidence="15">Belongs to the nuclear hormone receptor family. NR1 subfamily.</text>
</comment>
<accession>Q60674</accession>
<accession>Q60646</accession>
<protein>
    <recommendedName>
        <fullName evidence="15">Nuclear receptor subfamily 1 group D member 2</fullName>
    </recommendedName>
    <alternativeName>
        <fullName>Orphan nuclear receptor RVR</fullName>
    </alternativeName>
    <alternativeName>
        <fullName>Rev-erb-beta</fullName>
    </alternativeName>
</protein>
<feature type="chain" id="PRO_0000053502" description="Nuclear receptor subfamily 1 group D member 2">
    <location>
        <begin position="1"/>
        <end position="576"/>
    </location>
</feature>
<feature type="domain" description="NR LBD" evidence="4">
    <location>
        <begin position="366"/>
        <end position="576"/>
    </location>
</feature>
<feature type="DNA-binding region" description="Nuclear receptor" evidence="3">
    <location>
        <begin position="100"/>
        <end position="176"/>
    </location>
</feature>
<feature type="zinc finger region" description="NR C4-type" evidence="3">
    <location>
        <begin position="103"/>
        <end position="123"/>
    </location>
</feature>
<feature type="zinc finger region" description="NR C4-type" evidence="3">
    <location>
        <begin position="140"/>
        <end position="164"/>
    </location>
</feature>
<feature type="region of interest" description="Modulating">
    <location>
        <begin position="1"/>
        <end position="99"/>
    </location>
</feature>
<feature type="region of interest" description="Required for phosphorylation by CSNK1E and cytoplasmic localization" evidence="13">
    <location>
        <begin position="1"/>
        <end position="60"/>
    </location>
</feature>
<feature type="region of interest" description="Disordered" evidence="5">
    <location>
        <begin position="13"/>
        <end position="90"/>
    </location>
</feature>
<feature type="region of interest" description="Disordered" evidence="5">
    <location>
        <begin position="215"/>
        <end position="246"/>
    </location>
</feature>
<feature type="region of interest" description="Disordered" evidence="5">
    <location>
        <begin position="263"/>
        <end position="282"/>
    </location>
</feature>
<feature type="region of interest" description="Interaction with ZNHIT1" evidence="1">
    <location>
        <begin position="394"/>
        <end position="576"/>
    </location>
</feature>
<feature type="compositionally biased region" description="Low complexity" evidence="5">
    <location>
        <begin position="13"/>
        <end position="47"/>
    </location>
</feature>
<feature type="compositionally biased region" description="Basic and acidic residues" evidence="5">
    <location>
        <begin position="227"/>
        <end position="237"/>
    </location>
</feature>
<feature type="compositionally biased region" description="Basic and acidic residues" evidence="5">
    <location>
        <begin position="263"/>
        <end position="272"/>
    </location>
</feature>
<feature type="binding site" evidence="1">
    <location>
        <position position="381"/>
    </location>
    <ligand>
        <name>heme</name>
        <dbReference type="ChEBI" id="CHEBI:30413"/>
    </ligand>
</feature>
<feature type="binding site" evidence="1">
    <location>
        <position position="565"/>
    </location>
    <ligand>
        <name>heme</name>
        <dbReference type="ChEBI" id="CHEBI:30413"/>
    </ligand>
</feature>
<feature type="modified residue" description="Phosphoserine; by GSK3-beta" evidence="1">
    <location>
        <position position="46"/>
    </location>
</feature>
<feature type="modified residue" description="N6-acetyllysine; by KAT5" evidence="2">
    <location>
        <position position="162"/>
    </location>
</feature>
<feature type="modified residue" description="N6-acetyllysine; by KAT5" evidence="2">
    <location>
        <position position="163"/>
    </location>
</feature>
<feature type="disulfide bond" evidence="1">
    <location>
        <begin position="334"/>
        <end position="340"/>
    </location>
</feature>
<feature type="disulfide bond" evidence="1">
    <location>
        <begin position="371"/>
        <end position="381"/>
    </location>
</feature>
<keyword id="KW-0007">Acetylation</keyword>
<keyword id="KW-0010">Activator</keyword>
<keyword id="KW-0090">Biological rhythms</keyword>
<keyword id="KW-0963">Cytoplasm</keyword>
<keyword id="KW-1015">Disulfide bond</keyword>
<keyword id="KW-0238">DNA-binding</keyword>
<keyword id="KW-0349">Heme</keyword>
<keyword id="KW-0408">Iron</keyword>
<keyword id="KW-0479">Metal-binding</keyword>
<keyword id="KW-0539">Nucleus</keyword>
<keyword id="KW-0597">Phosphoprotein</keyword>
<keyword id="KW-0675">Receptor</keyword>
<keyword id="KW-1185">Reference proteome</keyword>
<keyword id="KW-0678">Repressor</keyword>
<keyword id="KW-0804">Transcription</keyword>
<keyword id="KW-0805">Transcription regulation</keyword>
<keyword id="KW-0832">Ubl conjugation</keyword>
<keyword id="KW-0862">Zinc</keyword>
<keyword id="KW-0863">Zinc-finger</keyword>
<proteinExistence type="evidence at protein level"/>
<dbReference type="EMBL" id="U12142">
    <property type="protein sequence ID" value="AAA79513.1"/>
    <property type="molecule type" value="mRNA"/>
</dbReference>
<dbReference type="EMBL" id="U09504">
    <property type="protein sequence ID" value="AAC52144.1"/>
    <property type="molecule type" value="mRNA"/>
</dbReference>
<dbReference type="CCDS" id="CCDS36811.1"/>
<dbReference type="PIR" id="A57048">
    <property type="entry name" value="A57048"/>
</dbReference>
<dbReference type="RefSeq" id="NP_035714.3">
    <property type="nucleotide sequence ID" value="NM_011584.4"/>
</dbReference>
<dbReference type="SMR" id="Q60674"/>
<dbReference type="BioGRID" id="237266">
    <property type="interactions" value="5"/>
</dbReference>
<dbReference type="FunCoup" id="Q60674">
    <property type="interactions" value="3638"/>
</dbReference>
<dbReference type="IntAct" id="Q60674">
    <property type="interactions" value="2"/>
</dbReference>
<dbReference type="MINT" id="Q60674"/>
<dbReference type="STRING" id="10090.ENSMUSP00000088031"/>
<dbReference type="iPTMnet" id="Q60674"/>
<dbReference type="PhosphoSitePlus" id="Q60674"/>
<dbReference type="PaxDb" id="10090-ENSMUSP00000088031"/>
<dbReference type="ProteomicsDB" id="253009"/>
<dbReference type="Antibodypedia" id="11385">
    <property type="antibodies" value="338 antibodies from 31 providers"/>
</dbReference>
<dbReference type="DNASU" id="353187"/>
<dbReference type="Ensembl" id="ENSMUST00000090543.6">
    <property type="protein sequence ID" value="ENSMUSP00000088031.6"/>
    <property type="gene ID" value="ENSMUSG00000021775.12"/>
</dbReference>
<dbReference type="GeneID" id="353187"/>
<dbReference type="KEGG" id="mmu:353187"/>
<dbReference type="UCSC" id="uc007shp.2">
    <property type="organism name" value="mouse"/>
</dbReference>
<dbReference type="AGR" id="MGI:2449205"/>
<dbReference type="CTD" id="9975"/>
<dbReference type="MGI" id="MGI:2449205">
    <property type="gene designation" value="Nr1d2"/>
</dbReference>
<dbReference type="VEuPathDB" id="HostDB:ENSMUSG00000021775"/>
<dbReference type="eggNOG" id="KOG4846">
    <property type="taxonomic scope" value="Eukaryota"/>
</dbReference>
<dbReference type="GeneTree" id="ENSGT00940000155168"/>
<dbReference type="HOGENOM" id="CLU_007368_2_4_1"/>
<dbReference type="InParanoid" id="Q60674"/>
<dbReference type="OMA" id="PASCHSD"/>
<dbReference type="OrthoDB" id="7634782at2759"/>
<dbReference type="PhylomeDB" id="Q60674"/>
<dbReference type="TreeFam" id="TF328382"/>
<dbReference type="Reactome" id="R-MMU-383280">
    <property type="pathway name" value="Nuclear Receptor transcription pathway"/>
</dbReference>
<dbReference type="BioGRID-ORCS" id="353187">
    <property type="hits" value="1 hit in 77 CRISPR screens"/>
</dbReference>
<dbReference type="PRO" id="PR:Q60674"/>
<dbReference type="Proteomes" id="UP000000589">
    <property type="component" value="Chromosome 14"/>
</dbReference>
<dbReference type="RNAct" id="Q60674">
    <property type="molecule type" value="protein"/>
</dbReference>
<dbReference type="Bgee" id="ENSMUSG00000021775">
    <property type="expression patterns" value="Expressed in cerebellar vermis and 258 other cell types or tissues"/>
</dbReference>
<dbReference type="ExpressionAtlas" id="Q60674">
    <property type="expression patterns" value="baseline and differential"/>
</dbReference>
<dbReference type="GO" id="GO:0005737">
    <property type="term" value="C:cytoplasm"/>
    <property type="evidence" value="ECO:0000314"/>
    <property type="project" value="UniProtKB"/>
</dbReference>
<dbReference type="GO" id="GO:0005654">
    <property type="term" value="C:nucleoplasm"/>
    <property type="evidence" value="ECO:0007669"/>
    <property type="project" value="Ensembl"/>
</dbReference>
<dbReference type="GO" id="GO:0005634">
    <property type="term" value="C:nucleus"/>
    <property type="evidence" value="ECO:0000314"/>
    <property type="project" value="UniProtKB"/>
</dbReference>
<dbReference type="GO" id="GO:0000987">
    <property type="term" value="F:cis-regulatory region sequence-specific DNA binding"/>
    <property type="evidence" value="ECO:0000314"/>
    <property type="project" value="UniProtKB"/>
</dbReference>
<dbReference type="GO" id="GO:0003677">
    <property type="term" value="F:DNA binding"/>
    <property type="evidence" value="ECO:0000314"/>
    <property type="project" value="MGI"/>
</dbReference>
<dbReference type="GO" id="GO:0003700">
    <property type="term" value="F:DNA-binding transcription factor activity"/>
    <property type="evidence" value="ECO:0000314"/>
    <property type="project" value="MGI"/>
</dbReference>
<dbReference type="GO" id="GO:0001227">
    <property type="term" value="F:DNA-binding transcription repressor activity, RNA polymerase II-specific"/>
    <property type="evidence" value="ECO:0000314"/>
    <property type="project" value="NTNU_SB"/>
</dbReference>
<dbReference type="GO" id="GO:0004879">
    <property type="term" value="F:nuclear receptor activity"/>
    <property type="evidence" value="ECO:0007669"/>
    <property type="project" value="InterPro"/>
</dbReference>
<dbReference type="GO" id="GO:0000978">
    <property type="term" value="F:RNA polymerase II cis-regulatory region sequence-specific DNA binding"/>
    <property type="evidence" value="ECO:0000314"/>
    <property type="project" value="NTNU_SB"/>
</dbReference>
<dbReference type="GO" id="GO:0008270">
    <property type="term" value="F:zinc ion binding"/>
    <property type="evidence" value="ECO:0007669"/>
    <property type="project" value="UniProtKB-KW"/>
</dbReference>
<dbReference type="GO" id="GO:0048512">
    <property type="term" value="P:circadian behavior"/>
    <property type="evidence" value="ECO:0000315"/>
    <property type="project" value="UniProtKB"/>
</dbReference>
<dbReference type="GO" id="GO:0097009">
    <property type="term" value="P:energy homeostasis"/>
    <property type="evidence" value="ECO:0000315"/>
    <property type="project" value="UniProtKB"/>
</dbReference>
<dbReference type="GO" id="GO:0055088">
    <property type="term" value="P:lipid homeostasis"/>
    <property type="evidence" value="ECO:0000315"/>
    <property type="project" value="UniProtKB"/>
</dbReference>
<dbReference type="GO" id="GO:0045892">
    <property type="term" value="P:negative regulation of DNA-templated transcription"/>
    <property type="evidence" value="ECO:0000314"/>
    <property type="project" value="UniProtKB"/>
</dbReference>
<dbReference type="GO" id="GO:0050728">
    <property type="term" value="P:negative regulation of inflammatory response"/>
    <property type="evidence" value="ECO:0000315"/>
    <property type="project" value="UniProtKB"/>
</dbReference>
<dbReference type="GO" id="GO:0000122">
    <property type="term" value="P:negative regulation of transcription by RNA polymerase II"/>
    <property type="evidence" value="ECO:0000314"/>
    <property type="project" value="NTNU_SB"/>
</dbReference>
<dbReference type="GO" id="GO:0045893">
    <property type="term" value="P:positive regulation of DNA-templated transcription"/>
    <property type="evidence" value="ECO:0000315"/>
    <property type="project" value="UniProtKB"/>
</dbReference>
<dbReference type="GO" id="GO:0042752">
    <property type="term" value="P:regulation of circadian rhythm"/>
    <property type="evidence" value="ECO:0000314"/>
    <property type="project" value="UniProtKB"/>
</dbReference>
<dbReference type="GO" id="GO:0006355">
    <property type="term" value="P:regulation of DNA-templated transcription"/>
    <property type="evidence" value="ECO:0000314"/>
    <property type="project" value="MGI"/>
</dbReference>
<dbReference type="GO" id="GO:0050727">
    <property type="term" value="P:regulation of inflammatory response"/>
    <property type="evidence" value="ECO:0000315"/>
    <property type="project" value="UniProtKB"/>
</dbReference>
<dbReference type="GO" id="GO:0019216">
    <property type="term" value="P:regulation of lipid metabolic process"/>
    <property type="evidence" value="ECO:0000315"/>
    <property type="project" value="UniProtKB"/>
</dbReference>
<dbReference type="GO" id="GO:2001014">
    <property type="term" value="P:regulation of skeletal muscle cell differentiation"/>
    <property type="evidence" value="ECO:0000315"/>
    <property type="project" value="UniProtKB"/>
</dbReference>
<dbReference type="CDD" id="cd07166">
    <property type="entry name" value="NR_DBD_REV_ERB"/>
    <property type="match status" value="1"/>
</dbReference>
<dbReference type="CDD" id="cd06940">
    <property type="entry name" value="NR_LBD_REV_ERB"/>
    <property type="match status" value="1"/>
</dbReference>
<dbReference type="FunFam" id="1.10.565.10:FF:000016">
    <property type="entry name" value="Nuclear receptor subfamily 1 group D member 2"/>
    <property type="match status" value="1"/>
</dbReference>
<dbReference type="FunFam" id="3.30.50.10:FF:000013">
    <property type="entry name" value="Nuclear receptor subfamily 1 group D member 2"/>
    <property type="match status" value="1"/>
</dbReference>
<dbReference type="Gene3D" id="3.30.50.10">
    <property type="entry name" value="Erythroid Transcription Factor GATA-1, subunit A"/>
    <property type="match status" value="1"/>
</dbReference>
<dbReference type="Gene3D" id="1.10.565.10">
    <property type="entry name" value="Retinoid X Receptor"/>
    <property type="match status" value="1"/>
</dbReference>
<dbReference type="InterPro" id="IPR035500">
    <property type="entry name" value="NHR-like_dom_sf"/>
</dbReference>
<dbReference type="InterPro" id="IPR000536">
    <property type="entry name" value="Nucl_hrmn_rcpt_lig-bd"/>
</dbReference>
<dbReference type="InterPro" id="IPR050234">
    <property type="entry name" value="Nuclear_hormone_rcpt_NR1"/>
</dbReference>
<dbReference type="InterPro" id="IPR001723">
    <property type="entry name" value="Nuclear_hrmn_rcpt"/>
</dbReference>
<dbReference type="InterPro" id="IPR001728">
    <property type="entry name" value="ThyrH_rcpt"/>
</dbReference>
<dbReference type="InterPro" id="IPR001628">
    <property type="entry name" value="Znf_hrmn_rcpt"/>
</dbReference>
<dbReference type="InterPro" id="IPR013088">
    <property type="entry name" value="Znf_NHR/GATA"/>
</dbReference>
<dbReference type="PANTHER" id="PTHR24082">
    <property type="entry name" value="NUCLEAR HORMONE RECEPTOR"/>
    <property type="match status" value="1"/>
</dbReference>
<dbReference type="PANTHER" id="PTHR24082:SF112">
    <property type="entry name" value="NUCLEAR RECEPTOR SUBFAMILY 1 GROUP D MEMBER 2"/>
    <property type="match status" value="1"/>
</dbReference>
<dbReference type="Pfam" id="PF00104">
    <property type="entry name" value="Hormone_recep"/>
    <property type="match status" value="1"/>
</dbReference>
<dbReference type="Pfam" id="PF00105">
    <property type="entry name" value="zf-C4"/>
    <property type="match status" value="1"/>
</dbReference>
<dbReference type="PRINTS" id="PR00398">
    <property type="entry name" value="STRDHORMONER"/>
</dbReference>
<dbReference type="PRINTS" id="PR00047">
    <property type="entry name" value="STROIDFINGER"/>
</dbReference>
<dbReference type="PRINTS" id="PR00546">
    <property type="entry name" value="THYROIDHORMR"/>
</dbReference>
<dbReference type="SMART" id="SM00430">
    <property type="entry name" value="HOLI"/>
    <property type="match status" value="1"/>
</dbReference>
<dbReference type="SMART" id="SM00399">
    <property type="entry name" value="ZnF_C4"/>
    <property type="match status" value="1"/>
</dbReference>
<dbReference type="SUPFAM" id="SSF57716">
    <property type="entry name" value="Glucocorticoid receptor-like (DNA-binding domain)"/>
    <property type="match status" value="1"/>
</dbReference>
<dbReference type="SUPFAM" id="SSF48508">
    <property type="entry name" value="Nuclear receptor ligand-binding domain"/>
    <property type="match status" value="1"/>
</dbReference>
<dbReference type="PROSITE" id="PS51843">
    <property type="entry name" value="NR_LBD"/>
    <property type="match status" value="1"/>
</dbReference>
<dbReference type="PROSITE" id="PS00031">
    <property type="entry name" value="NUCLEAR_REC_DBD_1"/>
    <property type="match status" value="1"/>
</dbReference>
<dbReference type="PROSITE" id="PS51030">
    <property type="entry name" value="NUCLEAR_REC_DBD_2"/>
    <property type="match status" value="1"/>
</dbReference>
<evidence type="ECO:0000250" key="1"/>
<evidence type="ECO:0000250" key="2">
    <source>
        <dbReference type="UniProtKB" id="Q14995"/>
    </source>
</evidence>
<evidence type="ECO:0000255" key="3">
    <source>
        <dbReference type="PROSITE-ProRule" id="PRU00407"/>
    </source>
</evidence>
<evidence type="ECO:0000255" key="4">
    <source>
        <dbReference type="PROSITE-ProRule" id="PRU01189"/>
    </source>
</evidence>
<evidence type="ECO:0000256" key="5">
    <source>
        <dbReference type="SAM" id="MobiDB-lite"/>
    </source>
</evidence>
<evidence type="ECO:0000269" key="6">
    <source>
    </source>
</evidence>
<evidence type="ECO:0000269" key="7">
    <source>
    </source>
</evidence>
<evidence type="ECO:0000269" key="8">
    <source>
    </source>
</evidence>
<evidence type="ECO:0000269" key="9">
    <source>
    </source>
</evidence>
<evidence type="ECO:0000269" key="10">
    <source>
    </source>
</evidence>
<evidence type="ECO:0000269" key="11">
    <source>
    </source>
</evidence>
<evidence type="ECO:0000269" key="12">
    <source>
    </source>
</evidence>
<evidence type="ECO:0000269" key="13">
    <source>
    </source>
</evidence>
<evidence type="ECO:0000269" key="14">
    <source>
    </source>
</evidence>
<evidence type="ECO:0000305" key="15"/>
<evidence type="ECO:0000312" key="16">
    <source>
        <dbReference type="MGI" id="MGI:2449205"/>
    </source>
</evidence>
<name>NR1D2_MOUSE</name>
<organism>
    <name type="scientific">Mus musculus</name>
    <name type="common">Mouse</name>
    <dbReference type="NCBI Taxonomy" id="10090"/>
    <lineage>
        <taxon>Eukaryota</taxon>
        <taxon>Metazoa</taxon>
        <taxon>Chordata</taxon>
        <taxon>Craniata</taxon>
        <taxon>Vertebrata</taxon>
        <taxon>Euteleostomi</taxon>
        <taxon>Mammalia</taxon>
        <taxon>Eutheria</taxon>
        <taxon>Euarchontoglires</taxon>
        <taxon>Glires</taxon>
        <taxon>Rodentia</taxon>
        <taxon>Myomorpha</taxon>
        <taxon>Muroidea</taxon>
        <taxon>Muridae</taxon>
        <taxon>Murinae</taxon>
        <taxon>Mus</taxon>
        <taxon>Mus</taxon>
    </lineage>
</organism>